<reference key="1">
    <citation type="journal article" date="2002" name="Nature">
        <title>The genome sequence of Schizosaccharomyces pombe.</title>
        <authorList>
            <person name="Wood V."/>
            <person name="Gwilliam R."/>
            <person name="Rajandream M.A."/>
            <person name="Lyne M.H."/>
            <person name="Lyne R."/>
            <person name="Stewart A."/>
            <person name="Sgouros J.G."/>
            <person name="Peat N."/>
            <person name="Hayles J."/>
            <person name="Baker S.G."/>
            <person name="Basham D."/>
            <person name="Bowman S."/>
            <person name="Brooks K."/>
            <person name="Brown D."/>
            <person name="Brown S."/>
            <person name="Chillingworth T."/>
            <person name="Churcher C.M."/>
            <person name="Collins M."/>
            <person name="Connor R."/>
            <person name="Cronin A."/>
            <person name="Davis P."/>
            <person name="Feltwell T."/>
            <person name="Fraser A."/>
            <person name="Gentles S."/>
            <person name="Goble A."/>
            <person name="Hamlin N."/>
            <person name="Harris D.E."/>
            <person name="Hidalgo J."/>
            <person name="Hodgson G."/>
            <person name="Holroyd S."/>
            <person name="Hornsby T."/>
            <person name="Howarth S."/>
            <person name="Huckle E.J."/>
            <person name="Hunt S."/>
            <person name="Jagels K."/>
            <person name="James K.D."/>
            <person name="Jones L."/>
            <person name="Jones M."/>
            <person name="Leather S."/>
            <person name="McDonald S."/>
            <person name="McLean J."/>
            <person name="Mooney P."/>
            <person name="Moule S."/>
            <person name="Mungall K.L."/>
            <person name="Murphy L.D."/>
            <person name="Niblett D."/>
            <person name="Odell C."/>
            <person name="Oliver K."/>
            <person name="O'Neil S."/>
            <person name="Pearson D."/>
            <person name="Quail M.A."/>
            <person name="Rabbinowitsch E."/>
            <person name="Rutherford K.M."/>
            <person name="Rutter S."/>
            <person name="Saunders D."/>
            <person name="Seeger K."/>
            <person name="Sharp S."/>
            <person name="Skelton J."/>
            <person name="Simmonds M.N."/>
            <person name="Squares R."/>
            <person name="Squares S."/>
            <person name="Stevens K."/>
            <person name="Taylor K."/>
            <person name="Taylor R.G."/>
            <person name="Tivey A."/>
            <person name="Walsh S.V."/>
            <person name="Warren T."/>
            <person name="Whitehead S."/>
            <person name="Woodward J.R."/>
            <person name="Volckaert G."/>
            <person name="Aert R."/>
            <person name="Robben J."/>
            <person name="Grymonprez B."/>
            <person name="Weltjens I."/>
            <person name="Vanstreels E."/>
            <person name="Rieger M."/>
            <person name="Schaefer M."/>
            <person name="Mueller-Auer S."/>
            <person name="Gabel C."/>
            <person name="Fuchs M."/>
            <person name="Duesterhoeft A."/>
            <person name="Fritzc C."/>
            <person name="Holzer E."/>
            <person name="Moestl D."/>
            <person name="Hilbert H."/>
            <person name="Borzym K."/>
            <person name="Langer I."/>
            <person name="Beck A."/>
            <person name="Lehrach H."/>
            <person name="Reinhardt R."/>
            <person name="Pohl T.M."/>
            <person name="Eger P."/>
            <person name="Zimmermann W."/>
            <person name="Wedler H."/>
            <person name="Wambutt R."/>
            <person name="Purnelle B."/>
            <person name="Goffeau A."/>
            <person name="Cadieu E."/>
            <person name="Dreano S."/>
            <person name="Gloux S."/>
            <person name="Lelaure V."/>
            <person name="Mottier S."/>
            <person name="Galibert F."/>
            <person name="Aves S.J."/>
            <person name="Xiang Z."/>
            <person name="Hunt C."/>
            <person name="Moore K."/>
            <person name="Hurst S.M."/>
            <person name="Lucas M."/>
            <person name="Rochet M."/>
            <person name="Gaillardin C."/>
            <person name="Tallada V.A."/>
            <person name="Garzon A."/>
            <person name="Thode G."/>
            <person name="Daga R.R."/>
            <person name="Cruzado L."/>
            <person name="Jimenez J."/>
            <person name="Sanchez M."/>
            <person name="del Rey F."/>
            <person name="Benito J."/>
            <person name="Dominguez A."/>
            <person name="Revuelta J.L."/>
            <person name="Moreno S."/>
            <person name="Armstrong J."/>
            <person name="Forsburg S.L."/>
            <person name="Cerutti L."/>
            <person name="Lowe T."/>
            <person name="McCombie W.R."/>
            <person name="Paulsen I."/>
            <person name="Potashkin J."/>
            <person name="Shpakovski G.V."/>
            <person name="Ussery D."/>
            <person name="Barrell B.G."/>
            <person name="Nurse P."/>
        </authorList>
    </citation>
    <scope>NUCLEOTIDE SEQUENCE [LARGE SCALE GENOMIC DNA]</scope>
    <source>
        <strain>972 / ATCC 24843</strain>
    </source>
</reference>
<reference key="2">
    <citation type="journal article" date="2006" name="Nat. Biotechnol.">
        <title>ORFeome cloning and global analysis of protein localization in the fission yeast Schizosaccharomyces pombe.</title>
        <authorList>
            <person name="Matsuyama A."/>
            <person name="Arai R."/>
            <person name="Yashiroda Y."/>
            <person name="Shirai A."/>
            <person name="Kamata A."/>
            <person name="Sekido S."/>
            <person name="Kobayashi Y."/>
            <person name="Hashimoto A."/>
            <person name="Hamamoto M."/>
            <person name="Hiraoka Y."/>
            <person name="Horinouchi S."/>
            <person name="Yoshida M."/>
        </authorList>
    </citation>
    <scope>SUBCELLULAR LOCATION [LARGE SCALE ANALYSIS]</scope>
</reference>
<evidence type="ECO:0000269" key="1">
    <source>
    </source>
</evidence>
<gene>
    <name type="ORF">SPAC1805.14</name>
</gene>
<organism>
    <name type="scientific">Schizosaccharomyces pombe (strain 972 / ATCC 24843)</name>
    <name type="common">Fission yeast</name>
    <dbReference type="NCBI Taxonomy" id="284812"/>
    <lineage>
        <taxon>Eukaryota</taxon>
        <taxon>Fungi</taxon>
        <taxon>Dikarya</taxon>
        <taxon>Ascomycota</taxon>
        <taxon>Taphrinomycotina</taxon>
        <taxon>Schizosaccharomycetes</taxon>
        <taxon>Schizosaccharomycetales</taxon>
        <taxon>Schizosaccharomycetaceae</taxon>
        <taxon>Schizosaccharomyces</taxon>
    </lineage>
</organism>
<name>YKEE_SCHPO</name>
<proteinExistence type="predicted"/>
<protein>
    <recommendedName>
        <fullName>Uncharacterized protein C1805.14</fullName>
    </recommendedName>
</protein>
<accession>Q9UTG3</accession>
<sequence length="452" mass="50947">MFRRNTLTPGKGRNSLDMFSVNDFMTWIDGMKKTSDENGCSPFTLKPIKSTSDRKRRRHSRMSIVNVWNQSPTSYRDQLLHFNHESDVSIDDTSEVAGEETFGQIERFEYLLSSDGDGDGDVEIENPEVDDYQVSEHDFGLEDDFNGDGCQQMIEIESDEAISEEEEDLSNENKSESQLGESFSFNQDNTFVNYASPASITEEFVEPKDSQFNHDVNLMQGSAPGYSTVEPEDNFASEIQTNAPEVHLNYENSDYTEDHIDLLDHHFCDLSEISKFNHQHSGKPDHPSLVSNASLAPFIVEGNGIKNGLLHYNMETAETDESYTDLDDTFARLKNLSQRHTNHSTDHHDDTVDSHLLHSFVSAENANEPTNDVDDNSLQEQVADASQFVSFLETTKTVATSNLRSTKRKLSEILENGQSGDCSLTDTNVDFDISEKQASGNSRSMIPLRKKR</sequence>
<keyword id="KW-0963">Cytoplasm</keyword>
<keyword id="KW-0539">Nucleus</keyword>
<keyword id="KW-1185">Reference proteome</keyword>
<feature type="chain" id="PRO_0000304108" description="Uncharacterized protein C1805.14">
    <location>
        <begin position="1"/>
        <end position="452"/>
    </location>
</feature>
<dbReference type="EMBL" id="CU329670">
    <property type="protein sequence ID" value="CAB55855.1"/>
    <property type="molecule type" value="Genomic_DNA"/>
</dbReference>
<dbReference type="PIR" id="T37899">
    <property type="entry name" value="T37899"/>
</dbReference>
<dbReference type="RefSeq" id="NP_593925.1">
    <property type="nucleotide sequence ID" value="NM_001019354.2"/>
</dbReference>
<dbReference type="BioGRID" id="278886">
    <property type="interactions" value="78"/>
</dbReference>
<dbReference type="STRING" id="284812.Q9UTG3"/>
<dbReference type="iPTMnet" id="Q9UTG3"/>
<dbReference type="PaxDb" id="4896-SPAC1805.14.1"/>
<dbReference type="EnsemblFungi" id="SPAC1805.14.1">
    <property type="protein sequence ID" value="SPAC1805.14.1:pep"/>
    <property type="gene ID" value="SPAC1805.14"/>
</dbReference>
<dbReference type="KEGG" id="spo:2542424"/>
<dbReference type="PomBase" id="SPAC1805.14"/>
<dbReference type="VEuPathDB" id="FungiDB:SPAC1805.14"/>
<dbReference type="HOGENOM" id="CLU_600137_0_0_1"/>
<dbReference type="InParanoid" id="Q9UTG3"/>
<dbReference type="OMA" id="NDFMTWI"/>
<dbReference type="PRO" id="PR:Q9UTG3"/>
<dbReference type="Proteomes" id="UP000002485">
    <property type="component" value="Chromosome I"/>
</dbReference>
<dbReference type="GO" id="GO:0005829">
    <property type="term" value="C:cytosol"/>
    <property type="evidence" value="ECO:0007005"/>
    <property type="project" value="PomBase"/>
</dbReference>
<dbReference type="GO" id="GO:0005634">
    <property type="term" value="C:nucleus"/>
    <property type="evidence" value="ECO:0007005"/>
    <property type="project" value="PomBase"/>
</dbReference>
<comment type="subcellular location">
    <subcellularLocation>
        <location evidence="1">Cytoplasm</location>
    </subcellularLocation>
    <subcellularLocation>
        <location evidence="1">Nucleus</location>
    </subcellularLocation>
</comment>